<protein>
    <recommendedName>
        <fullName evidence="1">Bifunctional protein FolD</fullName>
    </recommendedName>
    <domain>
        <recommendedName>
            <fullName evidence="1">Methylenetetrahydrofolate dehydrogenase</fullName>
            <ecNumber evidence="1">1.5.1.5</ecNumber>
        </recommendedName>
    </domain>
    <domain>
        <recommendedName>
            <fullName evidence="1">Methenyltetrahydrofolate cyclohydrolase</fullName>
            <ecNumber evidence="1">3.5.4.9</ecNumber>
        </recommendedName>
    </domain>
</protein>
<accession>Q8E6M3</accession>
<proteinExistence type="inferred from homology"/>
<dbReference type="EC" id="1.5.1.5" evidence="1"/>
<dbReference type="EC" id="3.5.4.9" evidence="1"/>
<dbReference type="EMBL" id="AL766846">
    <property type="protein sequence ID" value="CAD46184.1"/>
    <property type="molecule type" value="Genomic_DNA"/>
</dbReference>
<dbReference type="RefSeq" id="WP_000137498.1">
    <property type="nucleotide sequence ID" value="NC_004368.1"/>
</dbReference>
<dbReference type="SMR" id="Q8E6M3"/>
<dbReference type="KEGG" id="san:gbs0540"/>
<dbReference type="eggNOG" id="COG0190">
    <property type="taxonomic scope" value="Bacteria"/>
</dbReference>
<dbReference type="HOGENOM" id="CLU_034045_2_1_9"/>
<dbReference type="UniPathway" id="UPA00193"/>
<dbReference type="Proteomes" id="UP000000823">
    <property type="component" value="Chromosome"/>
</dbReference>
<dbReference type="GO" id="GO:0005829">
    <property type="term" value="C:cytosol"/>
    <property type="evidence" value="ECO:0007669"/>
    <property type="project" value="TreeGrafter"/>
</dbReference>
<dbReference type="GO" id="GO:0004477">
    <property type="term" value="F:methenyltetrahydrofolate cyclohydrolase activity"/>
    <property type="evidence" value="ECO:0007669"/>
    <property type="project" value="UniProtKB-UniRule"/>
</dbReference>
<dbReference type="GO" id="GO:0004488">
    <property type="term" value="F:methylenetetrahydrofolate dehydrogenase (NADP+) activity"/>
    <property type="evidence" value="ECO:0007669"/>
    <property type="project" value="UniProtKB-UniRule"/>
</dbReference>
<dbReference type="GO" id="GO:0000105">
    <property type="term" value="P:L-histidine biosynthetic process"/>
    <property type="evidence" value="ECO:0007669"/>
    <property type="project" value="UniProtKB-KW"/>
</dbReference>
<dbReference type="GO" id="GO:0009086">
    <property type="term" value="P:methionine biosynthetic process"/>
    <property type="evidence" value="ECO:0007669"/>
    <property type="project" value="UniProtKB-KW"/>
</dbReference>
<dbReference type="GO" id="GO:0006164">
    <property type="term" value="P:purine nucleotide biosynthetic process"/>
    <property type="evidence" value="ECO:0007669"/>
    <property type="project" value="UniProtKB-KW"/>
</dbReference>
<dbReference type="GO" id="GO:0035999">
    <property type="term" value="P:tetrahydrofolate interconversion"/>
    <property type="evidence" value="ECO:0007669"/>
    <property type="project" value="UniProtKB-UniRule"/>
</dbReference>
<dbReference type="CDD" id="cd01080">
    <property type="entry name" value="NAD_bind_m-THF_DH_Cyclohyd"/>
    <property type="match status" value="1"/>
</dbReference>
<dbReference type="FunFam" id="3.40.50.10860:FF:000001">
    <property type="entry name" value="Bifunctional protein FolD"/>
    <property type="match status" value="1"/>
</dbReference>
<dbReference type="FunFam" id="3.40.50.720:FF:000094">
    <property type="entry name" value="Bifunctional protein FolD"/>
    <property type="match status" value="1"/>
</dbReference>
<dbReference type="Gene3D" id="3.40.50.10860">
    <property type="entry name" value="Leucine Dehydrogenase, chain A, domain 1"/>
    <property type="match status" value="1"/>
</dbReference>
<dbReference type="Gene3D" id="3.40.50.720">
    <property type="entry name" value="NAD(P)-binding Rossmann-like Domain"/>
    <property type="match status" value="1"/>
</dbReference>
<dbReference type="HAMAP" id="MF_01576">
    <property type="entry name" value="THF_DHG_CYH"/>
    <property type="match status" value="1"/>
</dbReference>
<dbReference type="InterPro" id="IPR046346">
    <property type="entry name" value="Aminoacid_DH-like_N_sf"/>
</dbReference>
<dbReference type="InterPro" id="IPR036291">
    <property type="entry name" value="NAD(P)-bd_dom_sf"/>
</dbReference>
<dbReference type="InterPro" id="IPR000672">
    <property type="entry name" value="THF_DH/CycHdrlase"/>
</dbReference>
<dbReference type="InterPro" id="IPR020630">
    <property type="entry name" value="THF_DH/CycHdrlase_cat_dom"/>
</dbReference>
<dbReference type="InterPro" id="IPR020867">
    <property type="entry name" value="THF_DH/CycHdrlase_CS"/>
</dbReference>
<dbReference type="InterPro" id="IPR020631">
    <property type="entry name" value="THF_DH/CycHdrlase_NAD-bd_dom"/>
</dbReference>
<dbReference type="NCBIfam" id="NF008058">
    <property type="entry name" value="PRK10792.1"/>
    <property type="match status" value="1"/>
</dbReference>
<dbReference type="NCBIfam" id="NF010776">
    <property type="entry name" value="PRK14179.1"/>
    <property type="match status" value="1"/>
</dbReference>
<dbReference type="NCBIfam" id="NF010783">
    <property type="entry name" value="PRK14186.1"/>
    <property type="match status" value="1"/>
</dbReference>
<dbReference type="NCBIfam" id="NF010785">
    <property type="entry name" value="PRK14188.1"/>
    <property type="match status" value="1"/>
</dbReference>
<dbReference type="PANTHER" id="PTHR48099:SF5">
    <property type="entry name" value="C-1-TETRAHYDROFOLATE SYNTHASE, CYTOPLASMIC"/>
    <property type="match status" value="1"/>
</dbReference>
<dbReference type="PANTHER" id="PTHR48099">
    <property type="entry name" value="C-1-TETRAHYDROFOLATE SYNTHASE, CYTOPLASMIC-RELATED"/>
    <property type="match status" value="1"/>
</dbReference>
<dbReference type="Pfam" id="PF00763">
    <property type="entry name" value="THF_DHG_CYH"/>
    <property type="match status" value="1"/>
</dbReference>
<dbReference type="Pfam" id="PF02882">
    <property type="entry name" value="THF_DHG_CYH_C"/>
    <property type="match status" value="1"/>
</dbReference>
<dbReference type="PRINTS" id="PR00085">
    <property type="entry name" value="THFDHDRGNASE"/>
</dbReference>
<dbReference type="SUPFAM" id="SSF53223">
    <property type="entry name" value="Aminoacid dehydrogenase-like, N-terminal domain"/>
    <property type="match status" value="1"/>
</dbReference>
<dbReference type="SUPFAM" id="SSF51735">
    <property type="entry name" value="NAD(P)-binding Rossmann-fold domains"/>
    <property type="match status" value="1"/>
</dbReference>
<dbReference type="PROSITE" id="PS00766">
    <property type="entry name" value="THF_DHG_CYH_1"/>
    <property type="match status" value="1"/>
</dbReference>
<dbReference type="PROSITE" id="PS00767">
    <property type="entry name" value="THF_DHG_CYH_2"/>
    <property type="match status" value="1"/>
</dbReference>
<name>FOLD_STRA3</name>
<feature type="chain" id="PRO_0000268509" description="Bifunctional protein FolD">
    <location>
        <begin position="1"/>
        <end position="284"/>
    </location>
</feature>
<feature type="binding site" evidence="1">
    <location>
        <begin position="165"/>
        <end position="167"/>
    </location>
    <ligand>
        <name>NADP(+)</name>
        <dbReference type="ChEBI" id="CHEBI:58349"/>
    </ligand>
</feature>
<feature type="binding site" evidence="1">
    <location>
        <position position="190"/>
    </location>
    <ligand>
        <name>NADP(+)</name>
        <dbReference type="ChEBI" id="CHEBI:58349"/>
    </ligand>
</feature>
<gene>
    <name evidence="1" type="primary">folD</name>
    <name type="ordered locus">gbs0540</name>
</gene>
<reference key="1">
    <citation type="journal article" date="2002" name="Mol. Microbiol.">
        <title>Genome sequence of Streptococcus agalactiae, a pathogen causing invasive neonatal disease.</title>
        <authorList>
            <person name="Glaser P."/>
            <person name="Rusniok C."/>
            <person name="Buchrieser C."/>
            <person name="Chevalier F."/>
            <person name="Frangeul L."/>
            <person name="Msadek T."/>
            <person name="Zouine M."/>
            <person name="Couve E."/>
            <person name="Lalioui L."/>
            <person name="Poyart C."/>
            <person name="Trieu-Cuot P."/>
            <person name="Kunst F."/>
        </authorList>
    </citation>
    <scope>NUCLEOTIDE SEQUENCE [LARGE SCALE GENOMIC DNA]</scope>
    <source>
        <strain>NEM316</strain>
    </source>
</reference>
<keyword id="KW-0028">Amino-acid biosynthesis</keyword>
<keyword id="KW-0368">Histidine biosynthesis</keyword>
<keyword id="KW-0378">Hydrolase</keyword>
<keyword id="KW-0486">Methionine biosynthesis</keyword>
<keyword id="KW-0511">Multifunctional enzyme</keyword>
<keyword id="KW-0521">NADP</keyword>
<keyword id="KW-0554">One-carbon metabolism</keyword>
<keyword id="KW-0560">Oxidoreductase</keyword>
<keyword id="KW-0658">Purine biosynthesis</keyword>
<evidence type="ECO:0000255" key="1">
    <source>
        <dbReference type="HAMAP-Rule" id="MF_01576"/>
    </source>
</evidence>
<organism>
    <name type="scientific">Streptococcus agalactiae serotype III (strain NEM316)</name>
    <dbReference type="NCBI Taxonomy" id="211110"/>
    <lineage>
        <taxon>Bacteria</taxon>
        <taxon>Bacillati</taxon>
        <taxon>Bacillota</taxon>
        <taxon>Bacilli</taxon>
        <taxon>Lactobacillales</taxon>
        <taxon>Streptococcaceae</taxon>
        <taxon>Streptococcus</taxon>
    </lineage>
</organism>
<comment type="function">
    <text evidence="1">Catalyzes the oxidation of 5,10-methylenetetrahydrofolate to 5,10-methenyltetrahydrofolate and then the hydrolysis of 5,10-methenyltetrahydrofolate to 10-formyltetrahydrofolate.</text>
</comment>
<comment type="catalytic activity">
    <reaction evidence="1">
        <text>(6R)-5,10-methylene-5,6,7,8-tetrahydrofolate + NADP(+) = (6R)-5,10-methenyltetrahydrofolate + NADPH</text>
        <dbReference type="Rhea" id="RHEA:22812"/>
        <dbReference type="ChEBI" id="CHEBI:15636"/>
        <dbReference type="ChEBI" id="CHEBI:57455"/>
        <dbReference type="ChEBI" id="CHEBI:57783"/>
        <dbReference type="ChEBI" id="CHEBI:58349"/>
        <dbReference type="EC" id="1.5.1.5"/>
    </reaction>
</comment>
<comment type="catalytic activity">
    <reaction evidence="1">
        <text>(6R)-5,10-methenyltetrahydrofolate + H2O = (6R)-10-formyltetrahydrofolate + H(+)</text>
        <dbReference type="Rhea" id="RHEA:23700"/>
        <dbReference type="ChEBI" id="CHEBI:15377"/>
        <dbReference type="ChEBI" id="CHEBI:15378"/>
        <dbReference type="ChEBI" id="CHEBI:57455"/>
        <dbReference type="ChEBI" id="CHEBI:195366"/>
        <dbReference type="EC" id="3.5.4.9"/>
    </reaction>
</comment>
<comment type="pathway">
    <text evidence="1">One-carbon metabolism; tetrahydrofolate interconversion.</text>
</comment>
<comment type="subunit">
    <text evidence="1">Homodimer.</text>
</comment>
<comment type="similarity">
    <text evidence="1">Belongs to the tetrahydrofolate dehydrogenase/cyclohydrolase family.</text>
</comment>
<sequence length="284" mass="31252">MTELIDGKALSQKMQAELGRKVERLKEQHGIIPGLAVILVGDNPASQVYVRNKERSALEAGFKSETLRLSESISQEELIDIIHQYNEDKSIHGILVQLPLPQHINDKKIILAIDPKKDVDGFHPMNTGHLWSGRPMMVPCTPAGIMEMFREYHVDLEGKHAVIIGRSNIVGKPMAQLLLDKNATVTLTHSRTRNLSEVTKEADILIVAIGQGHFVTKDFVKEGAVVIDVGMNRDENGKLIGDVVFEQVAEVASMITPVPGGVGPMTITMLLEQTYQAALRSVSL</sequence>